<sequence>MVDCGVDIYQLPVVPRACRSPRGRRLKIMRKQRSEFEVLAQVAGRFSGERKNRIVIGSLAHETKETKDDNVVVNNFLETMEVEVKPQPGLENLSQVLLSKDWLALGPSMPNSPITQEENFDSRSKIDSKRKVSHLKERGSCISQESQNMYPLKKRKLFYQNHSSESHDTPCTVKFGIKSLNISELLVDVPESATVGSLKLAVLEAVTQILKGGLNIGVLFQGKTIVDDSKTLLQIGIPYDDDDDENLGSLGFMLEPQKSETTTITTFTTVSPRTRLRQNQVLGSVDSTEAVAAKSVVPVRMKPAWQPEMVQRRIRRPFTVSEVEALVQAVERLGTGRWRDVKSHAFNHVNHRTYVDLKDKWKTLVHTAKISARQRRGEPVPQDLLDRVLAAHAFWSDRTG</sequence>
<accession>Q9M347</accession>
<accession>F4JBM6</accession>
<feature type="chain" id="PRO_0000394129" description="Telomere repeat-binding protein 6">
    <location>
        <begin position="1"/>
        <end position="400"/>
    </location>
</feature>
<feature type="domain" description="Ubiquitin-like">
    <location>
        <begin position="173"/>
        <end position="252"/>
    </location>
</feature>
<feature type="domain" description="HTH myb-type" evidence="1">
    <location>
        <begin position="310"/>
        <end position="369"/>
    </location>
</feature>
<feature type="DNA-binding region" description="H-T-H motif" evidence="1">
    <location>
        <begin position="338"/>
        <end position="365"/>
    </location>
</feature>
<feature type="sequence conflict" description="In Ref. 2; AEE79144." evidence="3" ref="2">
    <original>F</original>
    <variation>L</variation>
    <location>
        <position position="267"/>
    </location>
</feature>
<evidence type="ECO:0000255" key="1">
    <source>
        <dbReference type="PROSITE-ProRule" id="PRU00625"/>
    </source>
</evidence>
<evidence type="ECO:0000269" key="2">
    <source>
    </source>
</evidence>
<evidence type="ECO:0000305" key="3"/>
<gene>
    <name type="primary">TRP6</name>
    <name type="synonym">TRFL4</name>
    <name type="ordered locus">At3g53790</name>
    <name type="ORF">F5K20.90</name>
</gene>
<protein>
    <recommendedName>
        <fullName>Telomere repeat-binding protein 6</fullName>
    </recommendedName>
    <alternativeName>
        <fullName>Protein TRF-LIKE 4</fullName>
    </alternativeName>
</protein>
<keyword id="KW-0238">DNA-binding</keyword>
<keyword id="KW-0539">Nucleus</keyword>
<keyword id="KW-1185">Reference proteome</keyword>
<keyword id="KW-0804">Transcription</keyword>
<keyword id="KW-0805">Transcription regulation</keyword>
<proteinExistence type="evidence at protein level"/>
<dbReference type="EMBL" id="AL132960">
    <property type="protein sequence ID" value="CAB88341.1"/>
    <property type="molecule type" value="Genomic_DNA"/>
</dbReference>
<dbReference type="EMBL" id="CP002686">
    <property type="protein sequence ID" value="AEE79144.2"/>
    <property type="molecule type" value="Genomic_DNA"/>
</dbReference>
<dbReference type="PIR" id="T45919">
    <property type="entry name" value="T45919"/>
</dbReference>
<dbReference type="RefSeq" id="NP_001319741.1">
    <property type="nucleotide sequence ID" value="NM_001339633.1"/>
</dbReference>
<dbReference type="SMR" id="Q9M347"/>
<dbReference type="BioGRID" id="9863">
    <property type="interactions" value="1"/>
</dbReference>
<dbReference type="STRING" id="3702.Q9M347"/>
<dbReference type="PeptideAtlas" id="Q9M347"/>
<dbReference type="GeneID" id="824546"/>
<dbReference type="KEGG" id="ath:AT3G53790"/>
<dbReference type="Araport" id="AT3G53790"/>
<dbReference type="TAIR" id="AT3G53790"/>
<dbReference type="InParanoid" id="Q9M347"/>
<dbReference type="PhylomeDB" id="Q9M347"/>
<dbReference type="PRO" id="PR:Q9M347"/>
<dbReference type="Proteomes" id="UP000006548">
    <property type="component" value="Chromosome 3"/>
</dbReference>
<dbReference type="ExpressionAtlas" id="Q9M347">
    <property type="expression patterns" value="baseline and differential"/>
</dbReference>
<dbReference type="GO" id="GO:0005634">
    <property type="term" value="C:nucleus"/>
    <property type="evidence" value="ECO:0007669"/>
    <property type="project" value="UniProtKB-SubCell"/>
</dbReference>
<dbReference type="GO" id="GO:0042162">
    <property type="term" value="F:telomeric DNA binding"/>
    <property type="evidence" value="ECO:0007669"/>
    <property type="project" value="UniProtKB-ARBA"/>
</dbReference>
<dbReference type="CDD" id="cd11660">
    <property type="entry name" value="SANT_TRF"/>
    <property type="match status" value="1"/>
</dbReference>
<dbReference type="Gene3D" id="1.10.246.220">
    <property type="match status" value="1"/>
</dbReference>
<dbReference type="InterPro" id="IPR009057">
    <property type="entry name" value="Homeodomain-like_sf"/>
</dbReference>
<dbReference type="InterPro" id="IPR017930">
    <property type="entry name" value="Myb_dom"/>
</dbReference>
<dbReference type="InterPro" id="IPR001005">
    <property type="entry name" value="SANT/Myb"/>
</dbReference>
<dbReference type="InterPro" id="IPR031105">
    <property type="entry name" value="TRP_plant"/>
</dbReference>
<dbReference type="InterPro" id="IPR029071">
    <property type="entry name" value="Ubiquitin-like_domsf"/>
</dbReference>
<dbReference type="PANTHER" id="PTHR21717:SF70">
    <property type="entry name" value="TELOMERE REPEAT-BINDING PROTEIN 2-RELATED"/>
    <property type="match status" value="1"/>
</dbReference>
<dbReference type="PANTHER" id="PTHR21717">
    <property type="entry name" value="TELOMERIC REPEAT BINDING PROTEIN"/>
    <property type="match status" value="1"/>
</dbReference>
<dbReference type="Pfam" id="PF00249">
    <property type="entry name" value="Myb_DNA-binding"/>
    <property type="match status" value="1"/>
</dbReference>
<dbReference type="Pfam" id="PF23603">
    <property type="entry name" value="Ubiquitin_TPR1"/>
    <property type="match status" value="1"/>
</dbReference>
<dbReference type="SMART" id="SM00717">
    <property type="entry name" value="SANT"/>
    <property type="match status" value="1"/>
</dbReference>
<dbReference type="SUPFAM" id="SSF46689">
    <property type="entry name" value="Homeodomain-like"/>
    <property type="match status" value="1"/>
</dbReference>
<dbReference type="SUPFAM" id="SSF54236">
    <property type="entry name" value="Ubiquitin-like"/>
    <property type="match status" value="1"/>
</dbReference>
<dbReference type="PROSITE" id="PS51294">
    <property type="entry name" value="HTH_MYB"/>
    <property type="match status" value="1"/>
</dbReference>
<reference key="1">
    <citation type="journal article" date="2000" name="Nature">
        <title>Sequence and analysis of chromosome 3 of the plant Arabidopsis thaliana.</title>
        <authorList>
            <person name="Salanoubat M."/>
            <person name="Lemcke K."/>
            <person name="Rieger M."/>
            <person name="Ansorge W."/>
            <person name="Unseld M."/>
            <person name="Fartmann B."/>
            <person name="Valle G."/>
            <person name="Bloecker H."/>
            <person name="Perez-Alonso M."/>
            <person name="Obermaier B."/>
            <person name="Delseny M."/>
            <person name="Boutry M."/>
            <person name="Grivell L.A."/>
            <person name="Mache R."/>
            <person name="Puigdomenech P."/>
            <person name="De Simone V."/>
            <person name="Choisne N."/>
            <person name="Artiguenave F."/>
            <person name="Robert C."/>
            <person name="Brottier P."/>
            <person name="Wincker P."/>
            <person name="Cattolico L."/>
            <person name="Weissenbach J."/>
            <person name="Saurin W."/>
            <person name="Quetier F."/>
            <person name="Schaefer M."/>
            <person name="Mueller-Auer S."/>
            <person name="Gabel C."/>
            <person name="Fuchs M."/>
            <person name="Benes V."/>
            <person name="Wurmbach E."/>
            <person name="Drzonek H."/>
            <person name="Erfle H."/>
            <person name="Jordan N."/>
            <person name="Bangert S."/>
            <person name="Wiedelmann R."/>
            <person name="Kranz H."/>
            <person name="Voss H."/>
            <person name="Holland R."/>
            <person name="Brandt P."/>
            <person name="Nyakatura G."/>
            <person name="Vezzi A."/>
            <person name="D'Angelo M."/>
            <person name="Pallavicini A."/>
            <person name="Toppo S."/>
            <person name="Simionati B."/>
            <person name="Conrad A."/>
            <person name="Hornischer K."/>
            <person name="Kauer G."/>
            <person name="Loehnert T.-H."/>
            <person name="Nordsiek G."/>
            <person name="Reichelt J."/>
            <person name="Scharfe M."/>
            <person name="Schoen O."/>
            <person name="Bargues M."/>
            <person name="Terol J."/>
            <person name="Climent J."/>
            <person name="Navarro P."/>
            <person name="Collado C."/>
            <person name="Perez-Perez A."/>
            <person name="Ottenwaelder B."/>
            <person name="Duchemin D."/>
            <person name="Cooke R."/>
            <person name="Laudie M."/>
            <person name="Berger-Llauro C."/>
            <person name="Purnelle B."/>
            <person name="Masuy D."/>
            <person name="de Haan M."/>
            <person name="Maarse A.C."/>
            <person name="Alcaraz J.-P."/>
            <person name="Cottet A."/>
            <person name="Casacuberta E."/>
            <person name="Monfort A."/>
            <person name="Argiriou A."/>
            <person name="Flores M."/>
            <person name="Liguori R."/>
            <person name="Vitale D."/>
            <person name="Mannhaupt G."/>
            <person name="Haase D."/>
            <person name="Schoof H."/>
            <person name="Rudd S."/>
            <person name="Zaccaria P."/>
            <person name="Mewes H.-W."/>
            <person name="Mayer K.F.X."/>
            <person name="Kaul S."/>
            <person name="Town C.D."/>
            <person name="Koo H.L."/>
            <person name="Tallon L.J."/>
            <person name="Jenkins J."/>
            <person name="Rooney T."/>
            <person name="Rizzo M."/>
            <person name="Walts A."/>
            <person name="Utterback T."/>
            <person name="Fujii C.Y."/>
            <person name="Shea T.P."/>
            <person name="Creasy T.H."/>
            <person name="Haas B."/>
            <person name="Maiti R."/>
            <person name="Wu D."/>
            <person name="Peterson J."/>
            <person name="Van Aken S."/>
            <person name="Pai G."/>
            <person name="Militscher J."/>
            <person name="Sellers P."/>
            <person name="Gill J.E."/>
            <person name="Feldblyum T.V."/>
            <person name="Preuss D."/>
            <person name="Lin X."/>
            <person name="Nierman W.C."/>
            <person name="Salzberg S.L."/>
            <person name="White O."/>
            <person name="Venter J.C."/>
            <person name="Fraser C.M."/>
            <person name="Kaneko T."/>
            <person name="Nakamura Y."/>
            <person name="Sato S."/>
            <person name="Kato T."/>
            <person name="Asamizu E."/>
            <person name="Sasamoto S."/>
            <person name="Kimura T."/>
            <person name="Idesawa K."/>
            <person name="Kawashima K."/>
            <person name="Kishida Y."/>
            <person name="Kiyokawa C."/>
            <person name="Kohara M."/>
            <person name="Matsumoto M."/>
            <person name="Matsuno A."/>
            <person name="Muraki A."/>
            <person name="Nakayama S."/>
            <person name="Nakazaki N."/>
            <person name="Shinpo S."/>
            <person name="Takeuchi C."/>
            <person name="Wada T."/>
            <person name="Watanabe A."/>
            <person name="Yamada M."/>
            <person name="Yasuda M."/>
            <person name="Tabata S."/>
        </authorList>
    </citation>
    <scope>NUCLEOTIDE SEQUENCE [LARGE SCALE GENOMIC DNA]</scope>
    <source>
        <strain>cv. Columbia</strain>
    </source>
</reference>
<reference key="2">
    <citation type="journal article" date="2017" name="Plant J.">
        <title>Araport11: a complete reannotation of the Arabidopsis thaliana reference genome.</title>
        <authorList>
            <person name="Cheng C.Y."/>
            <person name="Krishnakumar V."/>
            <person name="Chan A.P."/>
            <person name="Thibaud-Nissen F."/>
            <person name="Schobel S."/>
            <person name="Town C.D."/>
        </authorList>
    </citation>
    <scope>GENOME REANNOTATION</scope>
    <scope>SEQUENCE REVISION</scope>
    <source>
        <strain>cv. Columbia</strain>
    </source>
</reference>
<reference key="3">
    <citation type="journal article" date="2004" name="J. Biol. Chem.">
        <title>A C-terminal Myb extension domain defines a novel family of double-strand telomeric DNA-binding proteins in Arabidopsis.</title>
        <authorList>
            <person name="Karamysheva Z.N."/>
            <person name="Surovtseva Y.V."/>
            <person name="Vespa L."/>
            <person name="Shakirov E.V."/>
            <person name="Shippen D.E."/>
        </authorList>
    </citation>
    <scope>GENE FAMILY</scope>
    <scope>DNA-BINDING</scope>
    <scope>TISSUE SPECIFICITY</scope>
    <scope>SUBUNIT</scope>
    <scope>DISRUPTION PHENOTYPE</scope>
</reference>
<comment type="function">
    <text>Binds specifically to the plant telomeric double-stranded DNA sequences. At least 4 repeats of telomeric sequences are required for binding.</text>
</comment>
<comment type="subunit">
    <text evidence="2">Homodimer.</text>
</comment>
<comment type="subcellular location">
    <subcellularLocation>
        <location evidence="1">Nucleus</location>
    </subcellularLocation>
</comment>
<comment type="tissue specificity">
    <text evidence="2">Expressed ubiquitously.</text>
</comment>
<comment type="disruption phenotype">
    <text evidence="2">No visible phenotype, probably due to redundancy.</text>
</comment>
<name>TRP6_ARATH</name>
<organism>
    <name type="scientific">Arabidopsis thaliana</name>
    <name type="common">Mouse-ear cress</name>
    <dbReference type="NCBI Taxonomy" id="3702"/>
    <lineage>
        <taxon>Eukaryota</taxon>
        <taxon>Viridiplantae</taxon>
        <taxon>Streptophyta</taxon>
        <taxon>Embryophyta</taxon>
        <taxon>Tracheophyta</taxon>
        <taxon>Spermatophyta</taxon>
        <taxon>Magnoliopsida</taxon>
        <taxon>eudicotyledons</taxon>
        <taxon>Gunneridae</taxon>
        <taxon>Pentapetalae</taxon>
        <taxon>rosids</taxon>
        <taxon>malvids</taxon>
        <taxon>Brassicales</taxon>
        <taxon>Brassicaceae</taxon>
        <taxon>Camelineae</taxon>
        <taxon>Arabidopsis</taxon>
    </lineage>
</organism>